<protein>
    <recommendedName>
        <fullName>Probable endonuclease LCL3</fullName>
        <ecNumber>3.1.-.-</ecNumber>
    </recommendedName>
</protein>
<proteinExistence type="inferred from homology"/>
<sequence length="226" mass="25830">MPEDSNKASNTARVVFYTSILTGGILSSFYVYSRYFRRFTCTAEVPKKIYRGRTLFGRVTSVGDGDNFHFYHTPGGRLAGWGWLRPYPETNKRGLGKETLHIRLYGVDAPERPHFGRQGQPYGDEALEWLRSYILGRNVRVKLFSPDQYGRIVGGAKVWKLTGRKDVSTEMLKNGWGVKYEGKMGAEFNGKGKLFQKLEDHARKKKIGMFQQKGKIVTPGQYKKDE</sequence>
<dbReference type="EC" id="3.1.-.-"/>
<dbReference type="EMBL" id="CR382131">
    <property type="protein sequence ID" value="CAG80189.1"/>
    <property type="molecule type" value="Genomic_DNA"/>
</dbReference>
<dbReference type="RefSeq" id="XP_504585.1">
    <property type="nucleotide sequence ID" value="XM_504585.1"/>
</dbReference>
<dbReference type="SMR" id="Q6C427"/>
<dbReference type="FunCoup" id="Q6C427">
    <property type="interactions" value="15"/>
</dbReference>
<dbReference type="STRING" id="284591.Q6C427"/>
<dbReference type="EnsemblFungi" id="CAG80189">
    <property type="protein sequence ID" value="CAG80189"/>
    <property type="gene ID" value="YALI0_E30305g"/>
</dbReference>
<dbReference type="KEGG" id="yli:2911940"/>
<dbReference type="VEuPathDB" id="FungiDB:YALI0_E30305g"/>
<dbReference type="HOGENOM" id="CLU_046484_0_1_1"/>
<dbReference type="InParanoid" id="Q6C427"/>
<dbReference type="OMA" id="IYHTPGG"/>
<dbReference type="OrthoDB" id="30574at4891"/>
<dbReference type="Proteomes" id="UP000001300">
    <property type="component" value="Chromosome E"/>
</dbReference>
<dbReference type="GO" id="GO:0016020">
    <property type="term" value="C:membrane"/>
    <property type="evidence" value="ECO:0007669"/>
    <property type="project" value="UniProtKB-SubCell"/>
</dbReference>
<dbReference type="GO" id="GO:0005739">
    <property type="term" value="C:mitochondrion"/>
    <property type="evidence" value="ECO:0007669"/>
    <property type="project" value="UniProtKB-SubCell"/>
</dbReference>
<dbReference type="GO" id="GO:0004519">
    <property type="term" value="F:endonuclease activity"/>
    <property type="evidence" value="ECO:0007669"/>
    <property type="project" value="UniProtKB-KW"/>
</dbReference>
<dbReference type="GO" id="GO:0046872">
    <property type="term" value="F:metal ion binding"/>
    <property type="evidence" value="ECO:0007669"/>
    <property type="project" value="UniProtKB-KW"/>
</dbReference>
<dbReference type="FunFam" id="2.40.50.90:FF:000029">
    <property type="entry name" value="Probable endonuclease lcl3"/>
    <property type="match status" value="1"/>
</dbReference>
<dbReference type="Gene3D" id="2.40.50.90">
    <property type="match status" value="1"/>
</dbReference>
<dbReference type="InterPro" id="IPR035437">
    <property type="entry name" value="SNase_OB-fold_sf"/>
</dbReference>
<dbReference type="InterPro" id="IPR016071">
    <property type="entry name" value="Staphylococal_nuclease_OB-fold"/>
</dbReference>
<dbReference type="PANTHER" id="PTHR12302">
    <property type="entry name" value="EBNA2 BINDING PROTEIN P100"/>
    <property type="match status" value="1"/>
</dbReference>
<dbReference type="PANTHER" id="PTHR12302:SF3">
    <property type="entry name" value="SERINE_THREONINE-PROTEIN KINASE 31"/>
    <property type="match status" value="1"/>
</dbReference>
<dbReference type="Pfam" id="PF00565">
    <property type="entry name" value="SNase"/>
    <property type="match status" value="1"/>
</dbReference>
<dbReference type="SMART" id="SM00318">
    <property type="entry name" value="SNc"/>
    <property type="match status" value="1"/>
</dbReference>
<dbReference type="SUPFAM" id="SSF50199">
    <property type="entry name" value="Staphylococcal nuclease"/>
    <property type="match status" value="1"/>
</dbReference>
<dbReference type="PROSITE" id="PS50830">
    <property type="entry name" value="TNASE_3"/>
    <property type="match status" value="1"/>
</dbReference>
<feature type="chain" id="PRO_0000408687" description="Probable endonuclease LCL3">
    <location>
        <begin position="1"/>
        <end position="226"/>
    </location>
</feature>
<feature type="transmembrane region" description="Helical" evidence="2">
    <location>
        <begin position="15"/>
        <end position="32"/>
    </location>
</feature>
<feature type="domain" description="TNase-like" evidence="3">
    <location>
        <begin position="53"/>
        <end position="212"/>
    </location>
</feature>
<feature type="active site" evidence="3">
    <location>
        <position position="103"/>
    </location>
</feature>
<feature type="active site" evidence="3">
    <location>
        <position position="111"/>
    </location>
</feature>
<feature type="active site" evidence="3">
    <location>
        <position position="151"/>
    </location>
</feature>
<feature type="binding site" evidence="3">
    <location>
        <position position="108"/>
    </location>
    <ligand>
        <name>Ca(2+)</name>
        <dbReference type="ChEBI" id="CHEBI:29108"/>
    </ligand>
</feature>
<gene>
    <name type="primary">LCL3</name>
    <name type="ordered locus">YALI0E30305g</name>
</gene>
<keyword id="KW-0106">Calcium</keyword>
<keyword id="KW-0255">Endonuclease</keyword>
<keyword id="KW-0378">Hydrolase</keyword>
<keyword id="KW-0472">Membrane</keyword>
<keyword id="KW-0479">Metal-binding</keyword>
<keyword id="KW-0496">Mitochondrion</keyword>
<keyword id="KW-0540">Nuclease</keyword>
<keyword id="KW-1185">Reference proteome</keyword>
<keyword id="KW-0812">Transmembrane</keyword>
<keyword id="KW-1133">Transmembrane helix</keyword>
<organism>
    <name type="scientific">Yarrowia lipolytica (strain CLIB 122 / E 150)</name>
    <name type="common">Yeast</name>
    <name type="synonym">Candida lipolytica</name>
    <dbReference type="NCBI Taxonomy" id="284591"/>
    <lineage>
        <taxon>Eukaryota</taxon>
        <taxon>Fungi</taxon>
        <taxon>Dikarya</taxon>
        <taxon>Ascomycota</taxon>
        <taxon>Saccharomycotina</taxon>
        <taxon>Dipodascomycetes</taxon>
        <taxon>Dipodascales</taxon>
        <taxon>Dipodascales incertae sedis</taxon>
        <taxon>Yarrowia</taxon>
    </lineage>
</organism>
<accession>Q6C427</accession>
<name>LCL3_YARLI</name>
<comment type="subcellular location">
    <subcellularLocation>
        <location>Mitochondrion</location>
    </subcellularLocation>
    <subcellularLocation>
        <location evidence="1">Membrane</location>
        <topology evidence="1">Single-pass membrane protein</topology>
    </subcellularLocation>
</comment>
<comment type="similarity">
    <text evidence="4">Belongs to the LCL3 family.</text>
</comment>
<evidence type="ECO:0000250" key="1"/>
<evidence type="ECO:0000255" key="2"/>
<evidence type="ECO:0000255" key="3">
    <source>
        <dbReference type="PROSITE-ProRule" id="PRU00272"/>
    </source>
</evidence>
<evidence type="ECO:0000305" key="4"/>
<reference key="1">
    <citation type="journal article" date="2004" name="Nature">
        <title>Genome evolution in yeasts.</title>
        <authorList>
            <person name="Dujon B."/>
            <person name="Sherman D."/>
            <person name="Fischer G."/>
            <person name="Durrens P."/>
            <person name="Casaregola S."/>
            <person name="Lafontaine I."/>
            <person name="de Montigny J."/>
            <person name="Marck C."/>
            <person name="Neuveglise C."/>
            <person name="Talla E."/>
            <person name="Goffard N."/>
            <person name="Frangeul L."/>
            <person name="Aigle M."/>
            <person name="Anthouard V."/>
            <person name="Babour A."/>
            <person name="Barbe V."/>
            <person name="Barnay S."/>
            <person name="Blanchin S."/>
            <person name="Beckerich J.-M."/>
            <person name="Beyne E."/>
            <person name="Bleykasten C."/>
            <person name="Boisrame A."/>
            <person name="Boyer J."/>
            <person name="Cattolico L."/>
            <person name="Confanioleri F."/>
            <person name="de Daruvar A."/>
            <person name="Despons L."/>
            <person name="Fabre E."/>
            <person name="Fairhead C."/>
            <person name="Ferry-Dumazet H."/>
            <person name="Groppi A."/>
            <person name="Hantraye F."/>
            <person name="Hennequin C."/>
            <person name="Jauniaux N."/>
            <person name="Joyet P."/>
            <person name="Kachouri R."/>
            <person name="Kerrest A."/>
            <person name="Koszul R."/>
            <person name="Lemaire M."/>
            <person name="Lesur I."/>
            <person name="Ma L."/>
            <person name="Muller H."/>
            <person name="Nicaud J.-M."/>
            <person name="Nikolski M."/>
            <person name="Oztas S."/>
            <person name="Ozier-Kalogeropoulos O."/>
            <person name="Pellenz S."/>
            <person name="Potier S."/>
            <person name="Richard G.-F."/>
            <person name="Straub M.-L."/>
            <person name="Suleau A."/>
            <person name="Swennen D."/>
            <person name="Tekaia F."/>
            <person name="Wesolowski-Louvel M."/>
            <person name="Westhof E."/>
            <person name="Wirth B."/>
            <person name="Zeniou-Meyer M."/>
            <person name="Zivanovic Y."/>
            <person name="Bolotin-Fukuhara M."/>
            <person name="Thierry A."/>
            <person name="Bouchier C."/>
            <person name="Caudron B."/>
            <person name="Scarpelli C."/>
            <person name="Gaillardin C."/>
            <person name="Weissenbach J."/>
            <person name="Wincker P."/>
            <person name="Souciet J.-L."/>
        </authorList>
    </citation>
    <scope>NUCLEOTIDE SEQUENCE [LARGE SCALE GENOMIC DNA]</scope>
    <source>
        <strain>CLIB 122 / E 150</strain>
    </source>
</reference>